<protein>
    <recommendedName>
        <fullName evidence="1">ATP synthase subunit b</fullName>
    </recommendedName>
    <alternativeName>
        <fullName evidence="1">ATP synthase F(0) sector subunit b</fullName>
    </alternativeName>
    <alternativeName>
        <fullName evidence="1">ATPase subunit I</fullName>
    </alternativeName>
    <alternativeName>
        <fullName evidence="1">F-type ATPase subunit b</fullName>
        <shortName evidence="1">F-ATPase subunit b</shortName>
    </alternativeName>
</protein>
<accession>Q6CYJ1</accession>
<proteinExistence type="inferred from homology"/>
<feature type="chain" id="PRO_0000368470" description="ATP synthase subunit b">
    <location>
        <begin position="1"/>
        <end position="156"/>
    </location>
</feature>
<feature type="transmembrane region" description="Helical" evidence="1">
    <location>
        <begin position="7"/>
        <end position="26"/>
    </location>
</feature>
<evidence type="ECO:0000255" key="1">
    <source>
        <dbReference type="HAMAP-Rule" id="MF_01398"/>
    </source>
</evidence>
<organism>
    <name type="scientific">Pectobacterium atrosepticum (strain SCRI 1043 / ATCC BAA-672)</name>
    <name type="common">Erwinia carotovora subsp. atroseptica</name>
    <dbReference type="NCBI Taxonomy" id="218491"/>
    <lineage>
        <taxon>Bacteria</taxon>
        <taxon>Pseudomonadati</taxon>
        <taxon>Pseudomonadota</taxon>
        <taxon>Gammaproteobacteria</taxon>
        <taxon>Enterobacterales</taxon>
        <taxon>Pectobacteriaceae</taxon>
        <taxon>Pectobacterium</taxon>
    </lineage>
</organism>
<keyword id="KW-0066">ATP synthesis</keyword>
<keyword id="KW-0997">Cell inner membrane</keyword>
<keyword id="KW-1003">Cell membrane</keyword>
<keyword id="KW-0138">CF(0)</keyword>
<keyword id="KW-0375">Hydrogen ion transport</keyword>
<keyword id="KW-0406">Ion transport</keyword>
<keyword id="KW-0472">Membrane</keyword>
<keyword id="KW-1185">Reference proteome</keyword>
<keyword id="KW-0812">Transmembrane</keyword>
<keyword id="KW-1133">Transmembrane helix</keyword>
<keyword id="KW-0813">Transport</keyword>
<reference key="1">
    <citation type="journal article" date="2004" name="Proc. Natl. Acad. Sci. U.S.A.">
        <title>Genome sequence of the enterobacterial phytopathogen Erwinia carotovora subsp. atroseptica and characterization of virulence factors.</title>
        <authorList>
            <person name="Bell K.S."/>
            <person name="Sebaihia M."/>
            <person name="Pritchard L."/>
            <person name="Holden M.T.G."/>
            <person name="Hyman L.J."/>
            <person name="Holeva M.C."/>
            <person name="Thomson N.R."/>
            <person name="Bentley S.D."/>
            <person name="Churcher L.J.C."/>
            <person name="Mungall K."/>
            <person name="Atkin R."/>
            <person name="Bason N."/>
            <person name="Brooks K."/>
            <person name="Chillingworth T."/>
            <person name="Clark K."/>
            <person name="Doggett J."/>
            <person name="Fraser A."/>
            <person name="Hance Z."/>
            <person name="Hauser H."/>
            <person name="Jagels K."/>
            <person name="Moule S."/>
            <person name="Norbertczak H."/>
            <person name="Ormond D."/>
            <person name="Price C."/>
            <person name="Quail M.A."/>
            <person name="Sanders M."/>
            <person name="Walker D."/>
            <person name="Whitehead S."/>
            <person name="Salmond G.P.C."/>
            <person name="Birch P.R.J."/>
            <person name="Parkhill J."/>
            <person name="Toth I.K."/>
        </authorList>
    </citation>
    <scope>NUCLEOTIDE SEQUENCE [LARGE SCALE GENOMIC DNA]</scope>
    <source>
        <strain>SCRI 1043 / ATCC BAA-672</strain>
    </source>
</reference>
<name>ATPF_PECAS</name>
<sequence length="156" mass="17298">MNINATILGQAIAFVLFVWFCMKYVWPPMMAAIEKRQKEIADGLASAERAKKDLNLAQANATDQLKKAKADAQVIIEQANKRRAQILDEAKAEAEAERNKIVAQAQAEIEAERKRAREELRKQVAVLAIAGAEKIIERSVDEAANSDIVDKLVAEL</sequence>
<dbReference type="EMBL" id="BX950851">
    <property type="protein sequence ID" value="CAG77411.1"/>
    <property type="molecule type" value="Genomic_DNA"/>
</dbReference>
<dbReference type="RefSeq" id="WP_010681466.1">
    <property type="nucleotide sequence ID" value="NC_004547.2"/>
</dbReference>
<dbReference type="SMR" id="Q6CYJ1"/>
<dbReference type="STRING" id="218491.ECA4516"/>
<dbReference type="GeneID" id="93392469"/>
<dbReference type="KEGG" id="eca:ECA4516"/>
<dbReference type="eggNOG" id="COG0711">
    <property type="taxonomic scope" value="Bacteria"/>
</dbReference>
<dbReference type="HOGENOM" id="CLU_079215_4_5_6"/>
<dbReference type="OrthoDB" id="9788020at2"/>
<dbReference type="Proteomes" id="UP000007966">
    <property type="component" value="Chromosome"/>
</dbReference>
<dbReference type="GO" id="GO:0005886">
    <property type="term" value="C:plasma membrane"/>
    <property type="evidence" value="ECO:0007669"/>
    <property type="project" value="UniProtKB-SubCell"/>
</dbReference>
<dbReference type="GO" id="GO:0045259">
    <property type="term" value="C:proton-transporting ATP synthase complex"/>
    <property type="evidence" value="ECO:0007669"/>
    <property type="project" value="UniProtKB-KW"/>
</dbReference>
<dbReference type="GO" id="GO:0046933">
    <property type="term" value="F:proton-transporting ATP synthase activity, rotational mechanism"/>
    <property type="evidence" value="ECO:0007669"/>
    <property type="project" value="UniProtKB-UniRule"/>
</dbReference>
<dbReference type="GO" id="GO:0046961">
    <property type="term" value="F:proton-transporting ATPase activity, rotational mechanism"/>
    <property type="evidence" value="ECO:0007669"/>
    <property type="project" value="TreeGrafter"/>
</dbReference>
<dbReference type="CDD" id="cd06503">
    <property type="entry name" value="ATP-synt_Fo_b"/>
    <property type="match status" value="1"/>
</dbReference>
<dbReference type="Gene3D" id="6.10.250.1580">
    <property type="match status" value="1"/>
</dbReference>
<dbReference type="HAMAP" id="MF_01398">
    <property type="entry name" value="ATP_synth_b_bprime"/>
    <property type="match status" value="1"/>
</dbReference>
<dbReference type="InterPro" id="IPR028987">
    <property type="entry name" value="ATP_synth_B-like_membr_sf"/>
</dbReference>
<dbReference type="InterPro" id="IPR002146">
    <property type="entry name" value="ATP_synth_b/b'su_bac/chlpt"/>
</dbReference>
<dbReference type="InterPro" id="IPR005864">
    <property type="entry name" value="ATP_synth_F0_bsu_bac"/>
</dbReference>
<dbReference type="InterPro" id="IPR050059">
    <property type="entry name" value="ATP_synthase_B_chain"/>
</dbReference>
<dbReference type="NCBIfam" id="TIGR01144">
    <property type="entry name" value="ATP_synt_b"/>
    <property type="match status" value="1"/>
</dbReference>
<dbReference type="NCBIfam" id="NF004411">
    <property type="entry name" value="PRK05759.1-2"/>
    <property type="match status" value="1"/>
</dbReference>
<dbReference type="NCBIfam" id="NF004413">
    <property type="entry name" value="PRK05759.1-4"/>
    <property type="match status" value="1"/>
</dbReference>
<dbReference type="PANTHER" id="PTHR33445:SF1">
    <property type="entry name" value="ATP SYNTHASE SUBUNIT B"/>
    <property type="match status" value="1"/>
</dbReference>
<dbReference type="PANTHER" id="PTHR33445">
    <property type="entry name" value="ATP SYNTHASE SUBUNIT B', CHLOROPLASTIC"/>
    <property type="match status" value="1"/>
</dbReference>
<dbReference type="Pfam" id="PF00430">
    <property type="entry name" value="ATP-synt_B"/>
    <property type="match status" value="1"/>
</dbReference>
<dbReference type="SUPFAM" id="SSF81573">
    <property type="entry name" value="F1F0 ATP synthase subunit B, membrane domain"/>
    <property type="match status" value="1"/>
</dbReference>
<comment type="function">
    <text evidence="1">F(1)F(0) ATP synthase produces ATP from ADP in the presence of a proton or sodium gradient. F-type ATPases consist of two structural domains, F(1) containing the extramembraneous catalytic core and F(0) containing the membrane proton channel, linked together by a central stalk and a peripheral stalk. During catalysis, ATP synthesis in the catalytic domain of F(1) is coupled via a rotary mechanism of the central stalk subunits to proton translocation.</text>
</comment>
<comment type="function">
    <text evidence="1">Component of the F(0) channel, it forms part of the peripheral stalk, linking F(1) to F(0).</text>
</comment>
<comment type="subunit">
    <text evidence="1">F-type ATPases have 2 components, F(1) - the catalytic core - and F(0) - the membrane proton channel. F(1) has five subunits: alpha(3), beta(3), gamma(1), delta(1), epsilon(1). F(0) has three main subunits: a(1), b(2) and c(10-14). The alpha and beta chains form an alternating ring which encloses part of the gamma chain. F(1) is attached to F(0) by a central stalk formed by the gamma and epsilon chains, while a peripheral stalk is formed by the delta and b chains.</text>
</comment>
<comment type="subcellular location">
    <subcellularLocation>
        <location evidence="1">Cell inner membrane</location>
        <topology evidence="1">Single-pass membrane protein</topology>
    </subcellularLocation>
</comment>
<comment type="similarity">
    <text evidence="1">Belongs to the ATPase B chain family.</text>
</comment>
<gene>
    <name evidence="1" type="primary">atpF</name>
    <name type="ordered locus">ECA4516</name>
</gene>